<dbReference type="EC" id="3.1.1.-" evidence="2"/>
<dbReference type="EMBL" id="MU403194">
    <property type="protein sequence ID" value="KAI1452414.1"/>
    <property type="molecule type" value="Genomic_DNA"/>
</dbReference>
<dbReference type="UniPathway" id="UPA00213"/>
<dbReference type="CDD" id="cd07730">
    <property type="entry name" value="metallo-hydrolase-like_MBL-fold"/>
    <property type="match status" value="1"/>
</dbReference>
<dbReference type="Gene3D" id="3.60.15.10">
    <property type="entry name" value="Ribonuclease Z/Hydroxyacylglutathione hydrolase-like"/>
    <property type="match status" value="1"/>
</dbReference>
<dbReference type="InterPro" id="IPR051013">
    <property type="entry name" value="MBL_superfamily_lactonases"/>
</dbReference>
<dbReference type="InterPro" id="IPR001279">
    <property type="entry name" value="Metallo-B-lactamas"/>
</dbReference>
<dbReference type="InterPro" id="IPR036866">
    <property type="entry name" value="RibonucZ/Hydroxyglut_hydro"/>
</dbReference>
<dbReference type="PANTHER" id="PTHR42978:SF5">
    <property type="entry name" value="METALLO-BETA-LACTAMASE DOMAIN-CONTAINING PROTEIN"/>
    <property type="match status" value="1"/>
</dbReference>
<dbReference type="PANTHER" id="PTHR42978">
    <property type="entry name" value="QUORUM-QUENCHING LACTONASE YTNP-RELATED-RELATED"/>
    <property type="match status" value="1"/>
</dbReference>
<dbReference type="Pfam" id="PF00753">
    <property type="entry name" value="Lactamase_B"/>
    <property type="match status" value="1"/>
</dbReference>
<dbReference type="SMART" id="SM00849">
    <property type="entry name" value="Lactamase_B"/>
    <property type="match status" value="1"/>
</dbReference>
<dbReference type="SUPFAM" id="SSF56281">
    <property type="entry name" value="Metallo-hydrolase/oxidoreductase"/>
    <property type="match status" value="1"/>
</dbReference>
<comment type="function">
    <text evidence="2">Metallo-hydrolase; part of the gene cluster that mediates the biosynthesis of the phthalide-terpenoid hybrid 11'-O-desmethylfendlerol (PubMed:38404388). Within the pathway, mfma and mfmC act together to convert 3,5-dimethylorsellinic acid (DMOA) into the phthalide 5,7-dihydroxy-4-(hydroxymethyl)-6-methylphthalide (PubMed:38404388). The biosynthesis of 11'-O-desmethylfendlerol begins with the NR-PKS mfmB that forms 3,5-dimethylorsellinic acid (DMOA), which is then transformed into the phthalide 5,7-dihydroxy-4-(hydroxymethyl)-6-methylphthalide by the cytochrome P450 monooxygenase mfmA and the hydrolase mfmC. Subsequently, the methyltransferase mfmE catalyzes 7-O-methylation to yield 5-hydroxy-4-(hydroxymethyl)-7-methoxy-6-methylphthalide, which undergoes C-3 hydroxylation by the cytochrome P450 monooxygenase mfmF. The resultant cyclopolic acid (2,5-dihydroxy-4-(hydroxymethyl)-7-methoxy-6-methylphthalide) is then farnesylated by the DMATS-type prenyltransferase mfmD to afford 5-O-farnesylcyclopolic acid. Finally, the Pyr4-family terpene cyclase mfmH cyclizes the farnesyl moiety of 5-O-farnesylcyclopolic acid into a drimane-like structure, thus completing the biosynthesis of 11'-O-desmethylfendlerol (PubMed:38404388).</text>
</comment>
<comment type="pathway">
    <text evidence="2">Secondary metabolite biosynthesis; terpenoid biosynthesis.</text>
</comment>
<comment type="similarity">
    <text evidence="4">Belongs to the metallo-beta-lactamase superfamily.</text>
</comment>
<protein>
    <recommendedName>
        <fullName evidence="3">Metallo-hydrolase mfmC</fullName>
        <ecNumber evidence="2">3.1.1.-</ecNumber>
    </recommendedName>
    <alternativeName>
        <fullName evidence="3">11'-O-desmethylfendlerol biosynthesis cluster protein C</fullName>
    </alternativeName>
    <alternativeName>
        <fullName evidence="4">Metallo-beta-lactamase mfmC</fullName>
    </alternativeName>
</protein>
<accession>P9WEG2</accession>
<reference key="1">
    <citation type="journal article" date="2022" name="New Phytol.">
        <title>Ecological generalism drives hyperdiversity of secondary metabolite gene clusters in xylarialean endophytes.</title>
        <authorList>
            <person name="Franco M.E.E."/>
            <person name="Wisecaver J.H."/>
            <person name="Arnold A.E."/>
            <person name="Ju Y.M."/>
            <person name="Slot J.C."/>
            <person name="Ahrendt S."/>
            <person name="Moore L.P."/>
            <person name="Eastman K.E."/>
            <person name="Scott K."/>
            <person name="Konkel Z."/>
            <person name="Mondo S.J."/>
            <person name="Kuo A."/>
            <person name="Hayes R.D."/>
            <person name="Haridas S."/>
            <person name="Andreopoulos B."/>
            <person name="Riley R."/>
            <person name="LaButti K."/>
            <person name="Pangilinan J."/>
            <person name="Lipzen A."/>
            <person name="Amirebrahimi M."/>
            <person name="Yan J."/>
            <person name="Adam C."/>
            <person name="Keymanesh K."/>
            <person name="Ng V."/>
            <person name="Louie K."/>
            <person name="Northen T."/>
            <person name="Drula E."/>
            <person name="Henrissat B."/>
            <person name="Hsieh H.M."/>
            <person name="Youens-Clark K."/>
            <person name="Lutzoni F."/>
            <person name="Miadlikowska J."/>
            <person name="Eastwood D.C."/>
            <person name="Hamelin R.C."/>
            <person name="Grigoriev I.V."/>
            <person name="U'Ren J.M."/>
        </authorList>
    </citation>
    <scope>NUCLEOTIDE SEQUENCE [GENOMIC DNA]</scope>
    <source>
        <strain>CBS 123579</strain>
    </source>
</reference>
<reference key="2">
    <citation type="journal article" date="2024" name="Chem. Sci.">
        <title>Global genome mining-driven discovery of an unusual biosynthetic logic for fungal polyketide-terpenoid hybrids.</title>
        <authorList>
            <person name="Yan D."/>
            <person name="Matsuda Y."/>
        </authorList>
    </citation>
    <scope>FUNCTION</scope>
    <scope>CATALYTIC ACTIVITY</scope>
    <scope>PATHWAY</scope>
    <source>
        <strain>CBS 123579</strain>
    </source>
</reference>
<sequence>MVTKPTTPKPPPALGIPDSAYTVDVRVIDTGTLLHLNPSLFWQPPIDGFTGLHAPIYCFLVSHGSQHVIFDLGVRTDWENYAPKIVSIIKATTTVTPGSDVPSMLDEDTSGLGIRSADIGAVIWSHNHFDHVGDVSRFPLTTDLIVGPGVRGVSWPGWPSNPDGIVLDSDVEGRVVREVSFEAGLKIGHFDAMDFFGDGSFYLLDAPGHAVGHLCALARTTANEPTFVFMGADACHHPGLLRPSNYLPLPSASTLAGVLTGPPQCPGELLQQLTLPDEPFFTVAPRMFPDHDAATDTVRKIQELDASDNCLVLIAHDLSLRDKIPLFPKTINGWKESQVKTETRWLFCNDFMPALHHLDNKQGIEEELGKQSSLKCS</sequence>
<keyword id="KW-0378">Hydrolase</keyword>
<keyword id="KW-0479">Metal-binding</keyword>
<keyword id="KW-0862">Zinc</keyword>
<proteinExistence type="evidence at protein level"/>
<organism>
    <name type="scientific">Annulohypoxylon moriforme</name>
    <name type="common">Filamentous fungus</name>
    <name type="synonym">Hypoxylon moriforme</name>
    <dbReference type="NCBI Taxonomy" id="326622"/>
    <lineage>
        <taxon>Eukaryota</taxon>
        <taxon>Fungi</taxon>
        <taxon>Dikarya</taxon>
        <taxon>Ascomycota</taxon>
        <taxon>Pezizomycotina</taxon>
        <taxon>Sordariomycetes</taxon>
        <taxon>Xylariomycetidae</taxon>
        <taxon>Xylariales</taxon>
        <taxon>Hypoxylaceae</taxon>
        <taxon>Annulohypoxylon</taxon>
    </lineage>
</organism>
<gene>
    <name evidence="3" type="primary">mfmC</name>
    <name type="ORF">F4805DRAFT_462786</name>
</gene>
<evidence type="ECO:0000250" key="1">
    <source>
        <dbReference type="UniProtKB" id="Q7B8B9"/>
    </source>
</evidence>
<evidence type="ECO:0000269" key="2">
    <source>
    </source>
</evidence>
<evidence type="ECO:0000303" key="3">
    <source>
    </source>
</evidence>
<evidence type="ECO:0000305" key="4"/>
<name>MFMC_ANNMO</name>
<feature type="chain" id="PRO_0000461991" description="Metallo-hydrolase mfmC">
    <location>
        <begin position="1"/>
        <end position="377"/>
    </location>
</feature>
<feature type="binding site" evidence="1">
    <location>
        <position position="126"/>
    </location>
    <ligand>
        <name>Zn(2+)</name>
        <dbReference type="ChEBI" id="CHEBI:29105"/>
        <label>1</label>
    </ligand>
</feature>
<feature type="binding site" evidence="1">
    <location>
        <position position="128"/>
    </location>
    <ligand>
        <name>Zn(2+)</name>
        <dbReference type="ChEBI" id="CHEBI:29105"/>
        <label>1</label>
    </ligand>
</feature>
<feature type="binding site" evidence="1">
    <location>
        <position position="130"/>
    </location>
    <ligand>
        <name>Zn(2+)</name>
        <dbReference type="ChEBI" id="CHEBI:29105"/>
        <label>2</label>
    </ligand>
</feature>
<feature type="binding site" evidence="1">
    <location>
        <position position="131"/>
    </location>
    <ligand>
        <name>Zn(2+)</name>
        <dbReference type="ChEBI" id="CHEBI:29105"/>
        <label>2</label>
    </ligand>
</feature>
<feature type="binding site" evidence="1">
    <location>
        <position position="209"/>
    </location>
    <ligand>
        <name>Zn(2+)</name>
        <dbReference type="ChEBI" id="CHEBI:29105"/>
        <label>1</label>
    </ligand>
</feature>
<feature type="binding site" evidence="1">
    <location>
        <position position="233"/>
    </location>
    <ligand>
        <name>Zn(2+)</name>
        <dbReference type="ChEBI" id="CHEBI:29105"/>
        <label>1</label>
    </ligand>
</feature>
<feature type="binding site" evidence="1">
    <location>
        <position position="233"/>
    </location>
    <ligand>
        <name>Zn(2+)</name>
        <dbReference type="ChEBI" id="CHEBI:29105"/>
        <label>2</label>
    </ligand>
</feature>